<feature type="chain" id="PRO_1000009001" description="Sulfate adenylyltransferase subunit 2">
    <location>
        <begin position="1"/>
        <end position="302"/>
    </location>
</feature>
<comment type="function">
    <text evidence="1">With CysN forms the ATP sulfurylase (ATPS) that catalyzes the adenylation of sulfate producing adenosine 5'-phosphosulfate (APS) and diphosphate, the first enzymatic step in sulfur assimilation pathway. APS synthesis involves the formation of a high-energy phosphoric-sulfuric acid anhydride bond driven by GTP hydrolysis by CysN coupled to ATP hydrolysis by CysD.</text>
</comment>
<comment type="catalytic activity">
    <reaction evidence="1">
        <text>sulfate + ATP + H(+) = adenosine 5'-phosphosulfate + diphosphate</text>
        <dbReference type="Rhea" id="RHEA:18133"/>
        <dbReference type="ChEBI" id="CHEBI:15378"/>
        <dbReference type="ChEBI" id="CHEBI:16189"/>
        <dbReference type="ChEBI" id="CHEBI:30616"/>
        <dbReference type="ChEBI" id="CHEBI:33019"/>
        <dbReference type="ChEBI" id="CHEBI:58243"/>
        <dbReference type="EC" id="2.7.7.4"/>
    </reaction>
</comment>
<comment type="pathway">
    <text evidence="1">Sulfur metabolism; hydrogen sulfide biosynthesis; sulfite from sulfate: step 1/3.</text>
</comment>
<comment type="subunit">
    <text evidence="1">Heterodimer composed of CysD, the smaller subunit, and CysN.</text>
</comment>
<comment type="similarity">
    <text evidence="1">Belongs to the PAPS reductase family. CysD subfamily.</text>
</comment>
<name>CYSD_YERPA</name>
<reference key="1">
    <citation type="journal article" date="2006" name="J. Bacteriol.">
        <title>Complete genome sequence of Yersinia pestis strains Antiqua and Nepal516: evidence of gene reduction in an emerging pathogen.</title>
        <authorList>
            <person name="Chain P.S.G."/>
            <person name="Hu P."/>
            <person name="Malfatti S.A."/>
            <person name="Radnedge L."/>
            <person name="Larimer F."/>
            <person name="Vergez L.M."/>
            <person name="Worsham P."/>
            <person name="Chu M.C."/>
            <person name="Andersen G.L."/>
        </authorList>
    </citation>
    <scope>NUCLEOTIDE SEQUENCE [LARGE SCALE GENOMIC DNA]</scope>
    <source>
        <strain>Antiqua</strain>
    </source>
</reference>
<protein>
    <recommendedName>
        <fullName evidence="1">Sulfate adenylyltransferase subunit 2</fullName>
        <ecNumber evidence="1">2.7.7.4</ecNumber>
    </recommendedName>
    <alternativeName>
        <fullName evidence="1">ATP-sulfurylase small subunit</fullName>
    </alternativeName>
    <alternativeName>
        <fullName evidence="1">Sulfate adenylate transferase</fullName>
        <shortName evidence="1">SAT</shortName>
    </alternativeName>
</protein>
<organism>
    <name type="scientific">Yersinia pestis bv. Antiqua (strain Antiqua)</name>
    <dbReference type="NCBI Taxonomy" id="360102"/>
    <lineage>
        <taxon>Bacteria</taxon>
        <taxon>Pseudomonadati</taxon>
        <taxon>Pseudomonadota</taxon>
        <taxon>Gammaproteobacteria</taxon>
        <taxon>Enterobacterales</taxon>
        <taxon>Yersiniaceae</taxon>
        <taxon>Yersinia</taxon>
    </lineage>
</organism>
<accession>Q1C483</accession>
<keyword id="KW-0067">ATP-binding</keyword>
<keyword id="KW-0547">Nucleotide-binding</keyword>
<keyword id="KW-0548">Nucleotidyltransferase</keyword>
<keyword id="KW-0808">Transferase</keyword>
<sequence>MDEKRLTHLRQLEAESIHIIREVAAEFGNPVMLYSIGKDSSVMLHLARKAFFPGHLPFPLLHVDTGWKFREMYEFRDHTVKEFGCELLVHRNPEGVAMGINPFVHGSAKHTDIMKTEGLKQALNKYGFDAAFGGARRDEEKSRAKERIYSFRDRFHRWDPKNQRPELWHNYNGQINKGESIRVFPLSNWTELDIWQYIFLEKIEIVPLYLAKPRPVVERDGMLLMVDDDRIDLQPGEVIVQKKVRFRTLGCWPLTGAVESEAETLPAIIEEMLISTTSERQGRMIDRDQSGSMELKKRQGYF</sequence>
<evidence type="ECO:0000255" key="1">
    <source>
        <dbReference type="HAMAP-Rule" id="MF_00064"/>
    </source>
</evidence>
<dbReference type="EC" id="2.7.7.4" evidence="1"/>
<dbReference type="EMBL" id="CP000308">
    <property type="protein sequence ID" value="ABG14739.1"/>
    <property type="molecule type" value="Genomic_DNA"/>
</dbReference>
<dbReference type="RefSeq" id="WP_002209386.1">
    <property type="nucleotide sequence ID" value="NZ_CP009906.1"/>
</dbReference>
<dbReference type="SMR" id="Q1C483"/>
<dbReference type="GeneID" id="57975343"/>
<dbReference type="KEGG" id="ypa:YPA_2777"/>
<dbReference type="UniPathway" id="UPA00140">
    <property type="reaction ID" value="UER00204"/>
</dbReference>
<dbReference type="Proteomes" id="UP000001971">
    <property type="component" value="Chromosome"/>
</dbReference>
<dbReference type="GO" id="GO:0005524">
    <property type="term" value="F:ATP binding"/>
    <property type="evidence" value="ECO:0007669"/>
    <property type="project" value="UniProtKB-KW"/>
</dbReference>
<dbReference type="GO" id="GO:0004781">
    <property type="term" value="F:sulfate adenylyltransferase (ATP) activity"/>
    <property type="evidence" value="ECO:0007669"/>
    <property type="project" value="UniProtKB-UniRule"/>
</dbReference>
<dbReference type="GO" id="GO:0070814">
    <property type="term" value="P:hydrogen sulfide biosynthetic process"/>
    <property type="evidence" value="ECO:0007669"/>
    <property type="project" value="UniProtKB-UniRule"/>
</dbReference>
<dbReference type="GO" id="GO:0000103">
    <property type="term" value="P:sulfate assimilation"/>
    <property type="evidence" value="ECO:0007669"/>
    <property type="project" value="UniProtKB-UniRule"/>
</dbReference>
<dbReference type="CDD" id="cd23946">
    <property type="entry name" value="Sulfate_adenylyltransferase_2"/>
    <property type="match status" value="1"/>
</dbReference>
<dbReference type="FunFam" id="3.40.50.620:FF:000002">
    <property type="entry name" value="Sulfate adenylyltransferase subunit 2"/>
    <property type="match status" value="1"/>
</dbReference>
<dbReference type="Gene3D" id="3.40.50.620">
    <property type="entry name" value="HUPs"/>
    <property type="match status" value="1"/>
</dbReference>
<dbReference type="HAMAP" id="MF_00064">
    <property type="entry name" value="Sulf_adenylyltr_sub2"/>
    <property type="match status" value="1"/>
</dbReference>
<dbReference type="InterPro" id="IPR002500">
    <property type="entry name" value="PAPS_reduct_dom"/>
</dbReference>
<dbReference type="InterPro" id="IPR014729">
    <property type="entry name" value="Rossmann-like_a/b/a_fold"/>
</dbReference>
<dbReference type="InterPro" id="IPR011784">
    <property type="entry name" value="SO4_adenylTrfase_ssu"/>
</dbReference>
<dbReference type="InterPro" id="IPR050128">
    <property type="entry name" value="Sulfate_adenylyltrnsfr_sub2"/>
</dbReference>
<dbReference type="NCBIfam" id="TIGR02039">
    <property type="entry name" value="CysD"/>
    <property type="match status" value="1"/>
</dbReference>
<dbReference type="NCBIfam" id="NF003587">
    <property type="entry name" value="PRK05253.1"/>
    <property type="match status" value="1"/>
</dbReference>
<dbReference type="NCBIfam" id="NF009214">
    <property type="entry name" value="PRK12563.1"/>
    <property type="match status" value="1"/>
</dbReference>
<dbReference type="PANTHER" id="PTHR43196">
    <property type="entry name" value="SULFATE ADENYLYLTRANSFERASE SUBUNIT 2"/>
    <property type="match status" value="1"/>
</dbReference>
<dbReference type="PANTHER" id="PTHR43196:SF1">
    <property type="entry name" value="SULFATE ADENYLYLTRANSFERASE SUBUNIT 2"/>
    <property type="match status" value="1"/>
</dbReference>
<dbReference type="Pfam" id="PF01507">
    <property type="entry name" value="PAPS_reduct"/>
    <property type="match status" value="1"/>
</dbReference>
<dbReference type="PIRSF" id="PIRSF002936">
    <property type="entry name" value="CysDAde_trans"/>
    <property type="match status" value="1"/>
</dbReference>
<dbReference type="SUPFAM" id="SSF52402">
    <property type="entry name" value="Adenine nucleotide alpha hydrolases-like"/>
    <property type="match status" value="1"/>
</dbReference>
<proteinExistence type="inferred from homology"/>
<gene>
    <name evidence="1" type="primary">cysD</name>
    <name type="ordered locus">YPA_2777</name>
</gene>